<accession>Q8PX31</accession>
<keyword id="KW-0963">Cytoplasm</keyword>
<keyword id="KW-0378">Hydrolase</keyword>
<keyword id="KW-0479">Metal-binding</keyword>
<keyword id="KW-0547">Nucleotide-binding</keyword>
<protein>
    <recommendedName>
        <fullName evidence="1">5'-nucleotidase SurE</fullName>
        <ecNumber evidence="1">3.1.3.5</ecNumber>
    </recommendedName>
    <alternativeName>
        <fullName evidence="1">Nucleoside 5'-monophosphate phosphohydrolase</fullName>
    </alternativeName>
</protein>
<proteinExistence type="inferred from homology"/>
<organism>
    <name type="scientific">Methanosarcina mazei (strain ATCC BAA-159 / DSM 3647 / Goe1 / Go1 / JCM 11833 / OCM 88)</name>
    <name type="common">Methanosarcina frisia</name>
    <dbReference type="NCBI Taxonomy" id="192952"/>
    <lineage>
        <taxon>Archaea</taxon>
        <taxon>Methanobacteriati</taxon>
        <taxon>Methanobacteriota</taxon>
        <taxon>Stenosarchaea group</taxon>
        <taxon>Methanomicrobia</taxon>
        <taxon>Methanosarcinales</taxon>
        <taxon>Methanosarcinaceae</taxon>
        <taxon>Methanosarcina</taxon>
    </lineage>
</organism>
<evidence type="ECO:0000255" key="1">
    <source>
        <dbReference type="HAMAP-Rule" id="MF_00060"/>
    </source>
</evidence>
<gene>
    <name evidence="1" type="primary">surE</name>
    <name type="ordered locus">MM_1391</name>
</gene>
<reference key="1">
    <citation type="journal article" date="2002" name="J. Mol. Microbiol. Biotechnol.">
        <title>The genome of Methanosarcina mazei: evidence for lateral gene transfer between Bacteria and Archaea.</title>
        <authorList>
            <person name="Deppenmeier U."/>
            <person name="Johann A."/>
            <person name="Hartsch T."/>
            <person name="Merkl R."/>
            <person name="Schmitz R.A."/>
            <person name="Martinez-Arias R."/>
            <person name="Henne A."/>
            <person name="Wiezer A."/>
            <person name="Baeumer S."/>
            <person name="Jacobi C."/>
            <person name="Brueggemann H."/>
            <person name="Lienard T."/>
            <person name="Christmann A."/>
            <person name="Boemecke M."/>
            <person name="Steckel S."/>
            <person name="Bhattacharyya A."/>
            <person name="Lykidis A."/>
            <person name="Overbeek R."/>
            <person name="Klenk H.-P."/>
            <person name="Gunsalus R.P."/>
            <person name="Fritz H.-J."/>
            <person name="Gottschalk G."/>
        </authorList>
    </citation>
    <scope>NUCLEOTIDE SEQUENCE [LARGE SCALE GENOMIC DNA]</scope>
    <source>
        <strain>ATCC BAA-159 / DSM 3647 / Goe1 / Go1 / JCM 11833 / OCM 88</strain>
    </source>
</reference>
<feature type="chain" id="PRO_0000111866" description="5'-nucleotidase SurE">
    <location>
        <begin position="1"/>
        <end position="267"/>
    </location>
</feature>
<feature type="binding site" evidence="1">
    <location>
        <position position="14"/>
    </location>
    <ligand>
        <name>a divalent metal cation</name>
        <dbReference type="ChEBI" id="CHEBI:60240"/>
    </ligand>
</feature>
<feature type="binding site" evidence="1">
    <location>
        <position position="15"/>
    </location>
    <ligand>
        <name>a divalent metal cation</name>
        <dbReference type="ChEBI" id="CHEBI:60240"/>
    </ligand>
</feature>
<feature type="binding site" evidence="1">
    <location>
        <position position="45"/>
    </location>
    <ligand>
        <name>a divalent metal cation</name>
        <dbReference type="ChEBI" id="CHEBI:60240"/>
    </ligand>
</feature>
<feature type="binding site" evidence="1">
    <location>
        <position position="100"/>
    </location>
    <ligand>
        <name>a divalent metal cation</name>
        <dbReference type="ChEBI" id="CHEBI:60240"/>
    </ligand>
</feature>
<dbReference type="EC" id="3.1.3.5" evidence="1"/>
<dbReference type="EMBL" id="AE008384">
    <property type="protein sequence ID" value="AAM31087.1"/>
    <property type="molecule type" value="Genomic_DNA"/>
</dbReference>
<dbReference type="RefSeq" id="WP_011033337.1">
    <property type="nucleotide sequence ID" value="NC_003901.1"/>
</dbReference>
<dbReference type="SMR" id="Q8PX31"/>
<dbReference type="GeneID" id="82160435"/>
<dbReference type="KEGG" id="mma:MM_1391"/>
<dbReference type="PATRIC" id="fig|192952.21.peg.1613"/>
<dbReference type="eggNOG" id="arCOG02303">
    <property type="taxonomic scope" value="Archaea"/>
</dbReference>
<dbReference type="HOGENOM" id="CLU_045192_1_3_2"/>
<dbReference type="Proteomes" id="UP000000595">
    <property type="component" value="Chromosome"/>
</dbReference>
<dbReference type="GO" id="GO:0005737">
    <property type="term" value="C:cytoplasm"/>
    <property type="evidence" value="ECO:0007669"/>
    <property type="project" value="UniProtKB-SubCell"/>
</dbReference>
<dbReference type="GO" id="GO:0008253">
    <property type="term" value="F:5'-nucleotidase activity"/>
    <property type="evidence" value="ECO:0007669"/>
    <property type="project" value="UniProtKB-UniRule"/>
</dbReference>
<dbReference type="GO" id="GO:0046872">
    <property type="term" value="F:metal ion binding"/>
    <property type="evidence" value="ECO:0007669"/>
    <property type="project" value="UniProtKB-UniRule"/>
</dbReference>
<dbReference type="GO" id="GO:0000166">
    <property type="term" value="F:nucleotide binding"/>
    <property type="evidence" value="ECO:0007669"/>
    <property type="project" value="UniProtKB-KW"/>
</dbReference>
<dbReference type="Gene3D" id="3.40.1210.10">
    <property type="entry name" value="Survival protein SurE-like phosphatase/nucleotidase"/>
    <property type="match status" value="1"/>
</dbReference>
<dbReference type="HAMAP" id="MF_00060">
    <property type="entry name" value="SurE"/>
    <property type="match status" value="1"/>
</dbReference>
<dbReference type="InterPro" id="IPR030048">
    <property type="entry name" value="SurE"/>
</dbReference>
<dbReference type="InterPro" id="IPR002828">
    <property type="entry name" value="SurE-like_Pase/nucleotidase"/>
</dbReference>
<dbReference type="InterPro" id="IPR036523">
    <property type="entry name" value="SurE-like_sf"/>
</dbReference>
<dbReference type="NCBIfam" id="NF001491">
    <property type="entry name" value="PRK00346.2-1"/>
    <property type="match status" value="1"/>
</dbReference>
<dbReference type="NCBIfam" id="TIGR00087">
    <property type="entry name" value="surE"/>
    <property type="match status" value="1"/>
</dbReference>
<dbReference type="PANTHER" id="PTHR30457">
    <property type="entry name" value="5'-NUCLEOTIDASE SURE"/>
    <property type="match status" value="1"/>
</dbReference>
<dbReference type="PANTHER" id="PTHR30457:SF0">
    <property type="entry name" value="PHOSPHATASE, PUTATIVE (AFU_ORTHOLOGUE AFUA_4G01070)-RELATED"/>
    <property type="match status" value="1"/>
</dbReference>
<dbReference type="Pfam" id="PF01975">
    <property type="entry name" value="SurE"/>
    <property type="match status" value="1"/>
</dbReference>
<dbReference type="SUPFAM" id="SSF64167">
    <property type="entry name" value="SurE-like"/>
    <property type="match status" value="1"/>
</dbReference>
<sequence>MGKLMVPKILVTNDDGVYSTGLKAAFDSVSDLGEVTISAPAVQQSGVGRSISIFEPLRITKTDVGGIPAYAVGGTPTDSVILGVFTILKAMPDLVLSGFNIGENISTDTITTSGTIGGALEAASYGVPAIAASMQVLDEGQKFDDPRDYQRERFEAGIKVVNRIARNVLKRGMPENVDLLNINIPFHAEEDTPIEITRLARKIFKTDVEERRDPRGRPYYWIAGDLIREEEEGTDVHAIMQKGHVSITPISLDSTARIDFSEIERYL</sequence>
<name>SURE_METMA</name>
<comment type="function">
    <text evidence="1">Nucleotidase that shows phosphatase activity on nucleoside 5'-monophosphates.</text>
</comment>
<comment type="catalytic activity">
    <reaction evidence="1">
        <text>a ribonucleoside 5'-phosphate + H2O = a ribonucleoside + phosphate</text>
        <dbReference type="Rhea" id="RHEA:12484"/>
        <dbReference type="ChEBI" id="CHEBI:15377"/>
        <dbReference type="ChEBI" id="CHEBI:18254"/>
        <dbReference type="ChEBI" id="CHEBI:43474"/>
        <dbReference type="ChEBI" id="CHEBI:58043"/>
        <dbReference type="EC" id="3.1.3.5"/>
    </reaction>
</comment>
<comment type="cofactor">
    <cofactor evidence="1">
        <name>a divalent metal cation</name>
        <dbReference type="ChEBI" id="CHEBI:60240"/>
    </cofactor>
    <text evidence="1">Binds 1 divalent metal cation per subunit.</text>
</comment>
<comment type="subcellular location">
    <subcellularLocation>
        <location evidence="1">Cytoplasm</location>
    </subcellularLocation>
</comment>
<comment type="similarity">
    <text evidence="1">Belongs to the SurE nucleotidase family.</text>
</comment>